<reference evidence="5" key="1">
    <citation type="submission" date="2008-02" db="EMBL/GenBank/DDBJ databases">
        <title>Complete sequence of Escherichia coli C str. ATCC 8739.</title>
        <authorList>
            <person name="Copeland A."/>
            <person name="Lucas S."/>
            <person name="Lapidus A."/>
            <person name="Glavina del Rio T."/>
            <person name="Dalin E."/>
            <person name="Tice H."/>
            <person name="Bruce D."/>
            <person name="Goodwin L."/>
            <person name="Pitluck S."/>
            <person name="Kiss H."/>
            <person name="Brettin T."/>
            <person name="Detter J.C."/>
            <person name="Han C."/>
            <person name="Kuske C.R."/>
            <person name="Schmutz J."/>
            <person name="Larimer F."/>
            <person name="Land M."/>
            <person name="Hauser L."/>
            <person name="Kyrpides N."/>
            <person name="Mikhailova N."/>
            <person name="Ingram L."/>
            <person name="Richardson P."/>
        </authorList>
    </citation>
    <scope>NUCLEOTIDE SEQUENCE [LARGE SCALE GENOMIC DNA]</scope>
    <source>
        <strain>ATCC 8739 / DSM 1576 / NBRC 3972 / NCIMB 8545 / WDCM 00012 / Crooks</strain>
    </source>
</reference>
<reference key="2">
    <citation type="journal article" date="2018" name="Science">
        <title>Systematic discovery of antiphage defense systems in the microbial pangenome.</title>
        <authorList>
            <person name="Doron S."/>
            <person name="Melamed S."/>
            <person name="Ofir G."/>
            <person name="Leavitt A."/>
            <person name="Lopatina A."/>
            <person name="Keren M."/>
            <person name="Amitai G."/>
            <person name="Sorek R."/>
        </authorList>
    </citation>
    <scope>FUNCTION</scope>
    <scope>SUBCELLULAR LOCATION</scope>
    <source>
        <strain>ATCC 8739 / DSM 1576 / NBRC 3972 / NCIMB 8545 / WDCM 00012 / Crooks</strain>
    </source>
</reference>
<evidence type="ECO:0000255" key="1"/>
<evidence type="ECO:0000269" key="2">
    <source>
    </source>
</evidence>
<evidence type="ECO:0000303" key="3">
    <source>
    </source>
</evidence>
<evidence type="ECO:0000305" key="4">
    <source>
    </source>
</evidence>
<evidence type="ECO:0000312" key="5">
    <source>
        <dbReference type="EMBL" id="ACA79490.1"/>
    </source>
</evidence>
<protein>
    <recommendedName>
        <fullName evidence="3">Zorya protein ZorA</fullName>
    </recommendedName>
</protein>
<comment type="function">
    <text evidence="2 4">Component of antiviral defense system Zorya type II, composed of ZorA, ZorB and ZorE. Expression of Zorya type II in E.coli (strain MG1655) confers resistance to phages SECphi7 and T7. While most T7 infected Zorya-containing cells undergo abortive infection, a minority produce viable phage progeny. These eventually accumulate to a high multiplicity of infection, leading to culture collapse by 170 minutes after initial infection (PubMed:29371424). ZorA and ZorB probably assemble in the cell inner membrane and exert their effect there (Probable).</text>
</comment>
<comment type="subcellular location">
    <subcellularLocation>
        <location evidence="4">Cell inner membrane</location>
        <topology evidence="1">Multi-pass membrane protein</topology>
    </subcellularLocation>
</comment>
<comment type="similarity">
    <text evidence="4">Belongs to the MotA family.</text>
</comment>
<proteinExistence type="inferred from homology"/>
<keyword id="KW-0051">Antiviral defense</keyword>
<keyword id="KW-0997">Cell inner membrane</keyword>
<keyword id="KW-1003">Cell membrane</keyword>
<keyword id="KW-0472">Membrane</keyword>
<keyword id="KW-0812">Transmembrane</keyword>
<keyword id="KW-1133">Transmembrane helix</keyword>
<name>ZORA_ECOLC</name>
<sequence>MLAQLFEQLFQSIDSTLITNIFIWAVIFVFLSAWWCDKKNIHSKFREYAPTLMGALGILGTFIGIIIGLLNFNTESIDTSIPVLLGGLKTAFITSIVGMFFAILFNGMDAFFFANKRSALAENNPESVTPEHIYHELKEQNQTLTKLVSGINGDSEGSLIAQIKLLRTEISDSSQAQLANHTHFSNKLWEQLEQFADLMAKGATEQIIDALRQVIIDFNENLTEQFGENFKALDASVKKLVEWQGNYKTQIEQMSEQYQQSVESLVETKTAVAGIWEECKEIPLAMSELREVLQVNQHQISELSRHLETFVAIRDKATTVLPEIQNKMAEVGELLKSGAANVSASLEQTSQQILLNADSMRVALDEGTEGFRQSVTQTQQAFASMAHDVSNSSETLTSTLGETITEMKQSGEEFLKSLESHSKELHRNMEQNTTNVIDMFSKTGEKINHQLSSNADNMFDSIQTSFDKAGAGLTSQVRESIEKFALSINEQLHAFEQATEREMNREMQSLGNALLSISKGFVGNYEKLIKDYQIVMGQLQALISANKHRG</sequence>
<gene>
    <name evidence="3" type="primary">zorA</name>
    <name evidence="5" type="ordered locus">EcolC_3888</name>
</gene>
<feature type="chain" id="PRO_0000456339" description="Zorya protein ZorA">
    <location>
        <begin position="1"/>
        <end position="550"/>
    </location>
</feature>
<feature type="transmembrane region" description="Helical" evidence="1">
    <location>
        <begin position="16"/>
        <end position="36"/>
    </location>
</feature>
<feature type="transmembrane region" description="Helical" evidence="1">
    <location>
        <begin position="52"/>
        <end position="72"/>
    </location>
</feature>
<feature type="transmembrane region" description="Helical" evidence="1">
    <location>
        <begin position="92"/>
        <end position="112"/>
    </location>
</feature>
<dbReference type="EMBL" id="CP000946">
    <property type="protein sequence ID" value="ACA79490.1"/>
    <property type="molecule type" value="Genomic_DNA"/>
</dbReference>
<dbReference type="SMR" id="P0DW01"/>
<dbReference type="KEGG" id="ecl:EcolC_3888"/>
<dbReference type="GO" id="GO:0005886">
    <property type="term" value="C:plasma membrane"/>
    <property type="evidence" value="ECO:0007669"/>
    <property type="project" value="UniProtKB-SubCell"/>
</dbReference>
<dbReference type="GO" id="GO:0051607">
    <property type="term" value="P:defense response to virus"/>
    <property type="evidence" value="ECO:0007669"/>
    <property type="project" value="UniProtKB-KW"/>
</dbReference>
<dbReference type="Gene3D" id="1.20.120.20">
    <property type="entry name" value="Apolipoprotein"/>
    <property type="match status" value="1"/>
</dbReference>
<dbReference type="InterPro" id="IPR002898">
    <property type="entry name" value="MotA_ExbB_proton_chnl"/>
</dbReference>
<dbReference type="InterPro" id="IPR049669">
    <property type="entry name" value="ZorA-like_t2"/>
</dbReference>
<dbReference type="NCBIfam" id="NF041792">
    <property type="entry name" value="2_anti-phage_ZorA2"/>
    <property type="match status" value="1"/>
</dbReference>
<dbReference type="Pfam" id="PF01618">
    <property type="entry name" value="MotA_ExbB"/>
    <property type="match status" value="1"/>
</dbReference>
<dbReference type="SUPFAM" id="SSF58113">
    <property type="entry name" value="Apolipoprotein A-I"/>
    <property type="match status" value="1"/>
</dbReference>
<accession>P0DW01</accession>
<organism>
    <name type="scientific">Escherichia coli (strain ATCC 8739 / DSM 1576 / NBRC 3972 / NCIMB 8545 / WDCM 00012 / Crooks)</name>
    <dbReference type="NCBI Taxonomy" id="481805"/>
    <lineage>
        <taxon>Bacteria</taxon>
        <taxon>Pseudomonadati</taxon>
        <taxon>Pseudomonadota</taxon>
        <taxon>Gammaproteobacteria</taxon>
        <taxon>Enterobacterales</taxon>
        <taxon>Enterobacteriaceae</taxon>
        <taxon>Escherichia</taxon>
    </lineage>
</organism>